<keyword id="KW-1003">Cell membrane</keyword>
<keyword id="KW-0406">Ion transport</keyword>
<keyword id="KW-0472">Membrane</keyword>
<keyword id="KW-0769">Symport</keyword>
<keyword id="KW-0812">Transmembrane</keyword>
<keyword id="KW-1133">Transmembrane helix</keyword>
<keyword id="KW-0813">Transport</keyword>
<comment type="function">
    <text evidence="1">H(+)-stimulated, divalent metal cation uptake system.</text>
</comment>
<comment type="subcellular location">
    <subcellularLocation>
        <location evidence="2">Cell membrane</location>
        <topology evidence="2">Multi-pass membrane protein</topology>
    </subcellularLocation>
</comment>
<comment type="similarity">
    <text evidence="1">Belongs to the NRAMP family.</text>
</comment>
<sequence>MNNKRHSTNEQLSLDEINNTIKFDHRSSNKQKFLSFLGPGLLVAVGYMDPGNWITSMQGGAQYGYTLLFVILISSLSAMLLQSMTVRLGIATGMDLAQMTRHYLSRPIAIIFWIIAELAIIATDIAEVIGSAIALNLLFNIPLIVGALITVLDVFLLLFIMKYGFRKIEAIVGTLIFTVLFIFIFEVYISSPQLNAVLNGFIPHSEIITNNGILYIALGIIGATIMPHNLYLHSSIVQSRTYSRHNNEEKAQAIKFATIDSNIQLSIAFVVNCLLLVLGASLFFNSNADDLGGFYDLYHALKTEPVLGATMGAIMSTLFAVALLASGQNSTITGTLAGQIVMEGFLRLHIPNWLRRLITRSLAVIPVIVCLIIFKGNAAKIEQLLVFSQVFLSIALPFCLIPLQLATSNKDLMGPFYNKTWVNIISWTLIIILSILNVYLIVQTFQELQS</sequence>
<feature type="chain" id="PRO_0000212636" description="Divalent metal cation transporter MntH">
    <location>
        <begin position="1"/>
        <end position="450"/>
    </location>
</feature>
<feature type="transmembrane region" description="Helical" evidence="1">
    <location>
        <begin position="34"/>
        <end position="54"/>
    </location>
</feature>
<feature type="transmembrane region" description="Helical" evidence="1">
    <location>
        <begin position="61"/>
        <end position="81"/>
    </location>
</feature>
<feature type="transmembrane region" description="Helical" evidence="1">
    <location>
        <begin position="108"/>
        <end position="128"/>
    </location>
</feature>
<feature type="transmembrane region" description="Helical" evidence="1">
    <location>
        <begin position="141"/>
        <end position="161"/>
    </location>
</feature>
<feature type="transmembrane region" description="Helical" evidence="1">
    <location>
        <begin position="170"/>
        <end position="190"/>
    </location>
</feature>
<feature type="transmembrane region" description="Helical" evidence="1">
    <location>
        <begin position="212"/>
        <end position="232"/>
    </location>
</feature>
<feature type="transmembrane region" description="Helical" evidence="1">
    <location>
        <begin position="263"/>
        <end position="283"/>
    </location>
</feature>
<feature type="transmembrane region" description="Helical" evidence="1">
    <location>
        <begin position="305"/>
        <end position="325"/>
    </location>
</feature>
<feature type="transmembrane region" description="Helical" evidence="1">
    <location>
        <begin position="361"/>
        <end position="381"/>
    </location>
</feature>
<feature type="transmembrane region" description="Helical" evidence="1">
    <location>
        <begin position="383"/>
        <end position="403"/>
    </location>
</feature>
<feature type="transmembrane region" description="Helical" evidence="1">
    <location>
        <begin position="422"/>
        <end position="442"/>
    </location>
</feature>
<organism>
    <name type="scientific">Staphylococcus aureus (strain N315)</name>
    <dbReference type="NCBI Taxonomy" id="158879"/>
    <lineage>
        <taxon>Bacteria</taxon>
        <taxon>Bacillati</taxon>
        <taxon>Bacillota</taxon>
        <taxon>Bacilli</taxon>
        <taxon>Bacillales</taxon>
        <taxon>Staphylococcaceae</taxon>
        <taxon>Staphylococcus</taxon>
    </lineage>
</organism>
<accession>Q99UZ7</accession>
<evidence type="ECO:0000255" key="1">
    <source>
        <dbReference type="HAMAP-Rule" id="MF_00221"/>
    </source>
</evidence>
<evidence type="ECO:0000305" key="2"/>
<reference key="1">
    <citation type="journal article" date="2001" name="Lancet">
        <title>Whole genome sequencing of meticillin-resistant Staphylococcus aureus.</title>
        <authorList>
            <person name="Kuroda M."/>
            <person name="Ohta T."/>
            <person name="Uchiyama I."/>
            <person name="Baba T."/>
            <person name="Yuzawa H."/>
            <person name="Kobayashi I."/>
            <person name="Cui L."/>
            <person name="Oguchi A."/>
            <person name="Aoki K."/>
            <person name="Nagai Y."/>
            <person name="Lian J.-Q."/>
            <person name="Ito T."/>
            <person name="Kanamori M."/>
            <person name="Matsumaru H."/>
            <person name="Maruyama A."/>
            <person name="Murakami H."/>
            <person name="Hosoyama A."/>
            <person name="Mizutani-Ui Y."/>
            <person name="Takahashi N.K."/>
            <person name="Sawano T."/>
            <person name="Inoue R."/>
            <person name="Kaito C."/>
            <person name="Sekimizu K."/>
            <person name="Hirakawa H."/>
            <person name="Kuhara S."/>
            <person name="Goto S."/>
            <person name="Yabuzaki J."/>
            <person name="Kanehisa M."/>
            <person name="Yamashita A."/>
            <person name="Oshima K."/>
            <person name="Furuya K."/>
            <person name="Yoshino C."/>
            <person name="Shiba T."/>
            <person name="Hattori M."/>
            <person name="Ogasawara N."/>
            <person name="Hayashi H."/>
            <person name="Hiramatsu K."/>
        </authorList>
    </citation>
    <scope>NUCLEOTIDE SEQUENCE [LARGE SCALE GENOMIC DNA]</scope>
    <source>
        <strain>N315</strain>
    </source>
</reference>
<reference key="2">
    <citation type="submission" date="2007-10" db="UniProtKB">
        <title>Shotgun proteomic analysis of total and membrane protein extracts of S. aureus strain N315.</title>
        <authorList>
            <person name="Vaezzadeh A.R."/>
            <person name="Deshusses J."/>
            <person name="Lescuyer P."/>
            <person name="Hochstrasser D.F."/>
        </authorList>
    </citation>
    <scope>IDENTIFICATION BY MASS SPECTROMETRY [LARGE SCALE ANALYSIS]</scope>
    <source>
        <strain>N315</strain>
    </source>
</reference>
<protein>
    <recommendedName>
        <fullName evidence="1">Divalent metal cation transporter MntH</fullName>
    </recommendedName>
</protein>
<name>MNTH_STAAN</name>
<gene>
    <name evidence="1" type="primary">mntH</name>
    <name type="ordered locus">SA0956</name>
</gene>
<dbReference type="EMBL" id="BA000018">
    <property type="protein sequence ID" value="BAB42202.1"/>
    <property type="molecule type" value="Genomic_DNA"/>
</dbReference>
<dbReference type="PIR" id="F89880">
    <property type="entry name" value="F89880"/>
</dbReference>
<dbReference type="RefSeq" id="WP_001060842.1">
    <property type="nucleotide sequence ID" value="NC_002745.2"/>
</dbReference>
<dbReference type="SMR" id="Q99UZ7"/>
<dbReference type="EnsemblBacteria" id="BAB42202">
    <property type="protein sequence ID" value="BAB42202"/>
    <property type="gene ID" value="BAB42202"/>
</dbReference>
<dbReference type="KEGG" id="sau:SA0956"/>
<dbReference type="HOGENOM" id="CLU_020088_2_0_9"/>
<dbReference type="GO" id="GO:0005886">
    <property type="term" value="C:plasma membrane"/>
    <property type="evidence" value="ECO:0007669"/>
    <property type="project" value="UniProtKB-SubCell"/>
</dbReference>
<dbReference type="GO" id="GO:0015086">
    <property type="term" value="F:cadmium ion transmembrane transporter activity"/>
    <property type="evidence" value="ECO:0007669"/>
    <property type="project" value="TreeGrafter"/>
</dbReference>
<dbReference type="GO" id="GO:0005384">
    <property type="term" value="F:manganese ion transmembrane transporter activity"/>
    <property type="evidence" value="ECO:0007669"/>
    <property type="project" value="TreeGrafter"/>
</dbReference>
<dbReference type="GO" id="GO:0046872">
    <property type="term" value="F:metal ion binding"/>
    <property type="evidence" value="ECO:0007669"/>
    <property type="project" value="UniProtKB-UniRule"/>
</dbReference>
<dbReference type="GO" id="GO:0015293">
    <property type="term" value="F:symporter activity"/>
    <property type="evidence" value="ECO:0007669"/>
    <property type="project" value="UniProtKB-UniRule"/>
</dbReference>
<dbReference type="GO" id="GO:0034755">
    <property type="term" value="P:iron ion transmembrane transport"/>
    <property type="evidence" value="ECO:0007669"/>
    <property type="project" value="TreeGrafter"/>
</dbReference>
<dbReference type="HAMAP" id="MF_00221">
    <property type="entry name" value="NRAMP"/>
    <property type="match status" value="1"/>
</dbReference>
<dbReference type="InterPro" id="IPR001046">
    <property type="entry name" value="NRAMP_fam"/>
</dbReference>
<dbReference type="NCBIfam" id="TIGR01197">
    <property type="entry name" value="nramp"/>
    <property type="match status" value="1"/>
</dbReference>
<dbReference type="NCBIfam" id="NF037982">
    <property type="entry name" value="Nramp_1"/>
    <property type="match status" value="1"/>
</dbReference>
<dbReference type="NCBIfam" id="NF001923">
    <property type="entry name" value="PRK00701.1"/>
    <property type="match status" value="1"/>
</dbReference>
<dbReference type="PANTHER" id="PTHR11706:SF33">
    <property type="entry name" value="NATURAL RESISTANCE-ASSOCIATED MACROPHAGE PROTEIN 2"/>
    <property type="match status" value="1"/>
</dbReference>
<dbReference type="PANTHER" id="PTHR11706">
    <property type="entry name" value="SOLUTE CARRIER PROTEIN FAMILY 11 MEMBER"/>
    <property type="match status" value="1"/>
</dbReference>
<dbReference type="Pfam" id="PF01566">
    <property type="entry name" value="Nramp"/>
    <property type="match status" value="1"/>
</dbReference>
<dbReference type="PRINTS" id="PR00447">
    <property type="entry name" value="NATRESASSCMP"/>
</dbReference>
<proteinExistence type="evidence at protein level"/>